<protein>
    <recommendedName>
        <fullName evidence="1">L-rhamnonate dehydratase</fullName>
        <shortName evidence="1">RhamD</shortName>
        <ecNumber evidence="1">4.2.1.90</ecNumber>
    </recommendedName>
</protein>
<reference key="1">
    <citation type="journal article" date="2011" name="J. Bacteriol.">
        <title>Complete genome sequence of the plant growth-promoting endophyte Burkholderia phytofirmans strain PsJN.</title>
        <authorList>
            <person name="Weilharter A."/>
            <person name="Mitter B."/>
            <person name="Shin M.V."/>
            <person name="Chain P.S."/>
            <person name="Nowak J."/>
            <person name="Sessitsch A."/>
        </authorList>
    </citation>
    <scope>NUCLEOTIDE SEQUENCE [LARGE SCALE GENOMIC DNA]</scope>
    <source>
        <strain>DSM 17436 / LMG 22146 / PsJN</strain>
    </source>
</reference>
<proteinExistence type="inferred from homology"/>
<organism>
    <name type="scientific">Paraburkholderia phytofirmans (strain DSM 17436 / LMG 22146 / PsJN)</name>
    <name type="common">Burkholderia phytofirmans</name>
    <dbReference type="NCBI Taxonomy" id="398527"/>
    <lineage>
        <taxon>Bacteria</taxon>
        <taxon>Pseudomonadati</taxon>
        <taxon>Pseudomonadota</taxon>
        <taxon>Betaproteobacteria</taxon>
        <taxon>Burkholderiales</taxon>
        <taxon>Burkholderiaceae</taxon>
        <taxon>Paraburkholderia</taxon>
    </lineage>
</organism>
<keyword id="KW-0456">Lyase</keyword>
<keyword id="KW-0460">Magnesium</keyword>
<keyword id="KW-0479">Metal-binding</keyword>
<feature type="chain" id="PRO_0000351688" description="L-rhamnonate dehydratase">
    <location>
        <begin position="1"/>
        <end position="392"/>
    </location>
</feature>
<feature type="active site" description="Proton acceptor" evidence="1">
    <location>
        <position position="318"/>
    </location>
</feature>
<feature type="binding site" evidence="1">
    <location>
        <position position="22"/>
    </location>
    <ligand>
        <name>substrate</name>
    </ligand>
</feature>
<feature type="binding site" evidence="1">
    <location>
        <position position="48"/>
    </location>
    <ligand>
        <name>substrate</name>
    </ligand>
</feature>
<feature type="binding site" evidence="1">
    <location>
        <position position="214"/>
    </location>
    <ligand>
        <name>Mg(2+)</name>
        <dbReference type="ChEBI" id="CHEBI:18420"/>
    </ligand>
</feature>
<feature type="binding site" evidence="1">
    <location>
        <position position="240"/>
    </location>
    <ligand>
        <name>Mg(2+)</name>
        <dbReference type="ChEBI" id="CHEBI:18420"/>
    </ligand>
</feature>
<feature type="binding site" evidence="1">
    <location>
        <position position="268"/>
    </location>
    <ligand>
        <name>Mg(2+)</name>
        <dbReference type="ChEBI" id="CHEBI:18420"/>
    </ligand>
</feature>
<feature type="binding site" evidence="1">
    <location>
        <position position="338"/>
    </location>
    <ligand>
        <name>substrate</name>
    </ligand>
</feature>
<feature type="site" description="Increases basicity of active site His" evidence="1">
    <location>
        <position position="291"/>
    </location>
</feature>
<feature type="site" description="Transition state stabilizer" evidence="1">
    <location>
        <position position="338"/>
    </location>
</feature>
<comment type="function">
    <text evidence="1">Catalyzes the dehydration of L-rhamnonate to 2-keto-3-deoxy-L-rhamnonate (KDR).</text>
</comment>
<comment type="catalytic activity">
    <reaction evidence="1">
        <text>L-rhamnonate = 2-dehydro-3-deoxy-L-rhamnonate + H2O</text>
        <dbReference type="Rhea" id="RHEA:23080"/>
        <dbReference type="ChEBI" id="CHEBI:15377"/>
        <dbReference type="ChEBI" id="CHEBI:58118"/>
        <dbReference type="ChEBI" id="CHEBI:58371"/>
        <dbReference type="EC" id="4.2.1.90"/>
    </reaction>
</comment>
<comment type="cofactor">
    <cofactor evidence="1">
        <name>Mg(2+)</name>
        <dbReference type="ChEBI" id="CHEBI:18420"/>
    </cofactor>
    <text evidence="1">Binds 1 Mg(2+) ion per subunit.</text>
</comment>
<comment type="subunit">
    <text evidence="1">Homooctamer; tetramer of dimers.</text>
</comment>
<comment type="miscellaneous">
    <text evidence="1">Reaction proceeds via a syn dehydration.</text>
</comment>
<comment type="similarity">
    <text evidence="1">Belongs to the mandelate racemase/muconate lactonizing enzyme family. RhamD subfamily.</text>
</comment>
<dbReference type="EC" id="4.2.1.90" evidence="1"/>
<dbReference type="EMBL" id="CP001053">
    <property type="protein sequence ID" value="ACD20035.1"/>
    <property type="molecule type" value="Genomic_DNA"/>
</dbReference>
<dbReference type="RefSeq" id="WP_012427543.1">
    <property type="nucleotide sequence ID" value="NC_010676.1"/>
</dbReference>
<dbReference type="SMR" id="B2TFM7"/>
<dbReference type="STRING" id="398527.Bphyt_5689"/>
<dbReference type="GeneID" id="97309063"/>
<dbReference type="KEGG" id="bpy:Bphyt_5689"/>
<dbReference type="eggNOG" id="COG4948">
    <property type="taxonomic scope" value="Bacteria"/>
</dbReference>
<dbReference type="HOGENOM" id="CLU_030273_1_0_4"/>
<dbReference type="OrthoDB" id="103536at2"/>
<dbReference type="Proteomes" id="UP000001739">
    <property type="component" value="Chromosome 2"/>
</dbReference>
<dbReference type="GO" id="GO:0050032">
    <property type="term" value="F:L-rhamnonate dehydratase activity"/>
    <property type="evidence" value="ECO:0007669"/>
    <property type="project" value="UniProtKB-UniRule"/>
</dbReference>
<dbReference type="GO" id="GO:0000287">
    <property type="term" value="F:magnesium ion binding"/>
    <property type="evidence" value="ECO:0007669"/>
    <property type="project" value="UniProtKB-UniRule"/>
</dbReference>
<dbReference type="GO" id="GO:0009063">
    <property type="term" value="P:amino acid catabolic process"/>
    <property type="evidence" value="ECO:0007669"/>
    <property type="project" value="InterPro"/>
</dbReference>
<dbReference type="GO" id="GO:0016052">
    <property type="term" value="P:carbohydrate catabolic process"/>
    <property type="evidence" value="ECO:0007669"/>
    <property type="project" value="TreeGrafter"/>
</dbReference>
<dbReference type="CDD" id="cd03327">
    <property type="entry name" value="MR_like_2"/>
    <property type="match status" value="1"/>
</dbReference>
<dbReference type="FunFam" id="3.20.20.120:FF:000005">
    <property type="entry name" value="Putative L-rhamnonate dehydratase"/>
    <property type="match status" value="1"/>
</dbReference>
<dbReference type="Gene3D" id="3.20.20.120">
    <property type="entry name" value="Enolase-like C-terminal domain"/>
    <property type="match status" value="1"/>
</dbReference>
<dbReference type="Gene3D" id="3.30.390.10">
    <property type="entry name" value="Enolase-like, N-terminal domain"/>
    <property type="match status" value="1"/>
</dbReference>
<dbReference type="HAMAP" id="MF_01288">
    <property type="entry name" value="Rhamnon_dehydrat"/>
    <property type="match status" value="1"/>
</dbReference>
<dbReference type="InterPro" id="IPR036849">
    <property type="entry name" value="Enolase-like_C_sf"/>
</dbReference>
<dbReference type="InterPro" id="IPR029017">
    <property type="entry name" value="Enolase-like_N"/>
</dbReference>
<dbReference type="InterPro" id="IPR029065">
    <property type="entry name" value="Enolase_C-like"/>
</dbReference>
<dbReference type="InterPro" id="IPR023444">
    <property type="entry name" value="L-Rhamnon_dehydrat"/>
</dbReference>
<dbReference type="InterPro" id="IPR018110">
    <property type="entry name" value="Mandel_Rmase/mucon_lact_enz_CS"/>
</dbReference>
<dbReference type="InterPro" id="IPR013342">
    <property type="entry name" value="Mandelate_racemase_C"/>
</dbReference>
<dbReference type="InterPro" id="IPR013341">
    <property type="entry name" value="Mandelate_racemase_N_dom"/>
</dbReference>
<dbReference type="InterPro" id="IPR046945">
    <property type="entry name" value="RHMD-like"/>
</dbReference>
<dbReference type="NCBIfam" id="NF011968">
    <property type="entry name" value="PRK15440.1"/>
    <property type="match status" value="1"/>
</dbReference>
<dbReference type="PANTHER" id="PTHR13794">
    <property type="entry name" value="ENOLASE SUPERFAMILY, MANDELATE RACEMASE"/>
    <property type="match status" value="1"/>
</dbReference>
<dbReference type="PANTHER" id="PTHR13794:SF58">
    <property type="entry name" value="MITOCHONDRIAL ENOLASE SUPERFAMILY MEMBER 1"/>
    <property type="match status" value="1"/>
</dbReference>
<dbReference type="Pfam" id="PF13378">
    <property type="entry name" value="MR_MLE_C"/>
    <property type="match status" value="1"/>
</dbReference>
<dbReference type="Pfam" id="PF02746">
    <property type="entry name" value="MR_MLE_N"/>
    <property type="match status" value="1"/>
</dbReference>
<dbReference type="SFLD" id="SFLDS00001">
    <property type="entry name" value="Enolase"/>
    <property type="match status" value="1"/>
</dbReference>
<dbReference type="SFLD" id="SFLDF00006">
    <property type="entry name" value="rhamnonate_dehydratase"/>
    <property type="match status" value="1"/>
</dbReference>
<dbReference type="SMART" id="SM00922">
    <property type="entry name" value="MR_MLE"/>
    <property type="match status" value="1"/>
</dbReference>
<dbReference type="SUPFAM" id="SSF51604">
    <property type="entry name" value="Enolase C-terminal domain-like"/>
    <property type="match status" value="1"/>
</dbReference>
<dbReference type="SUPFAM" id="SSF54826">
    <property type="entry name" value="Enolase N-terminal domain-like"/>
    <property type="match status" value="1"/>
</dbReference>
<dbReference type="PROSITE" id="PS00908">
    <property type="entry name" value="MR_MLE_1"/>
    <property type="match status" value="1"/>
</dbReference>
<gene>
    <name evidence="1" type="primary">rhmD</name>
    <name type="ordered locus">Bphyt_5689</name>
</gene>
<evidence type="ECO:0000255" key="1">
    <source>
        <dbReference type="HAMAP-Rule" id="MF_01288"/>
    </source>
</evidence>
<name>RHMD_PARPJ</name>
<sequence length="392" mass="43926">MAMPTIRHVRAFIVRGGGADYHDQPGGHWIDDHISTPMARYPEYRQSRQSFGINVLGTLVVEIEASDGTVGFAVTTGGEIGAFIVEKHLARFLEGQLVTDIEKMWDQMYFSTLYYGRKGVVLNTISGVDLALWDLLAKVRKEPVYQLLGGPVRDELVFYATGARPDLAKEMGFIGGKLPLQHGPAEGEAGLKQNLEKLADMRSRVGDDFWLMYDCWMSLDVPYATRLAQAAHEYGLKWIEECLPPDDYWGYAELRRNVPRGMMVSTGEHEATRWGFRMLLEMQCCDLIQPDVGWCGGITELIKISALADAHNVMVVPHGSSVYSYHFVVTRHNSPFAEFLMMAPKADEVVPMFTPLLLDEPVPVNGRMKVPDTPGFGVRLNPECALVRPYPR</sequence>
<accession>B2TFM7</accession>